<name>C97B2_SOYBN</name>
<dbReference type="EC" id="1.14.-.-"/>
<dbReference type="EMBL" id="AF022457">
    <property type="protein sequence ID" value="AAB94586.1"/>
    <property type="molecule type" value="mRNA"/>
</dbReference>
<dbReference type="PIR" id="T05904">
    <property type="entry name" value="T05904"/>
</dbReference>
<dbReference type="RefSeq" id="NP_001235534.1">
    <property type="nucleotide sequence ID" value="NM_001248605.1"/>
</dbReference>
<dbReference type="SMR" id="O48921"/>
<dbReference type="FunCoup" id="O48921">
    <property type="interactions" value="2438"/>
</dbReference>
<dbReference type="STRING" id="3847.O48921"/>
<dbReference type="PaxDb" id="3847-GLYMA11G01860.1"/>
<dbReference type="GeneID" id="606504"/>
<dbReference type="KEGG" id="gmx:606504"/>
<dbReference type="eggNOG" id="KOG0157">
    <property type="taxonomic scope" value="Eukaryota"/>
</dbReference>
<dbReference type="HOGENOM" id="CLU_001570_5_5_1"/>
<dbReference type="InParanoid" id="O48921"/>
<dbReference type="OrthoDB" id="1470350at2759"/>
<dbReference type="Proteomes" id="UP000008827">
    <property type="component" value="Unplaced"/>
</dbReference>
<dbReference type="GO" id="GO:0031969">
    <property type="term" value="C:chloroplast membrane"/>
    <property type="evidence" value="ECO:0007669"/>
    <property type="project" value="UniProtKB-SubCell"/>
</dbReference>
<dbReference type="GO" id="GO:0020037">
    <property type="term" value="F:heme binding"/>
    <property type="evidence" value="ECO:0007669"/>
    <property type="project" value="InterPro"/>
</dbReference>
<dbReference type="GO" id="GO:0005506">
    <property type="term" value="F:iron ion binding"/>
    <property type="evidence" value="ECO:0007669"/>
    <property type="project" value="InterPro"/>
</dbReference>
<dbReference type="GO" id="GO:0004497">
    <property type="term" value="F:monooxygenase activity"/>
    <property type="evidence" value="ECO:0007669"/>
    <property type="project" value="UniProtKB-KW"/>
</dbReference>
<dbReference type="GO" id="GO:0016705">
    <property type="term" value="F:oxidoreductase activity, acting on paired donors, with incorporation or reduction of molecular oxygen"/>
    <property type="evidence" value="ECO:0007669"/>
    <property type="project" value="InterPro"/>
</dbReference>
<dbReference type="CDD" id="cd11046">
    <property type="entry name" value="CYP97"/>
    <property type="match status" value="1"/>
</dbReference>
<dbReference type="Gene3D" id="1.10.630.10">
    <property type="entry name" value="Cytochrome P450"/>
    <property type="match status" value="1"/>
</dbReference>
<dbReference type="InterPro" id="IPR001128">
    <property type="entry name" value="Cyt_P450"/>
</dbReference>
<dbReference type="InterPro" id="IPR017972">
    <property type="entry name" value="Cyt_P450_CS"/>
</dbReference>
<dbReference type="InterPro" id="IPR002401">
    <property type="entry name" value="Cyt_P450_E_grp-I"/>
</dbReference>
<dbReference type="InterPro" id="IPR036396">
    <property type="entry name" value="Cyt_P450_sf"/>
</dbReference>
<dbReference type="InterPro" id="IPR050196">
    <property type="entry name" value="Cytochrome_P450_Monoox"/>
</dbReference>
<dbReference type="PANTHER" id="PTHR24291:SF183">
    <property type="entry name" value="CYTOCHROME P450 97B3, CHLOROPLASTIC"/>
    <property type="match status" value="1"/>
</dbReference>
<dbReference type="PANTHER" id="PTHR24291">
    <property type="entry name" value="CYTOCHROME P450 FAMILY 4"/>
    <property type="match status" value="1"/>
</dbReference>
<dbReference type="Pfam" id="PF00067">
    <property type="entry name" value="p450"/>
    <property type="match status" value="1"/>
</dbReference>
<dbReference type="PRINTS" id="PR00463">
    <property type="entry name" value="EP450I"/>
</dbReference>
<dbReference type="PRINTS" id="PR00385">
    <property type="entry name" value="P450"/>
</dbReference>
<dbReference type="SUPFAM" id="SSF48264">
    <property type="entry name" value="Cytochrome P450"/>
    <property type="match status" value="1"/>
</dbReference>
<dbReference type="PROSITE" id="PS00086">
    <property type="entry name" value="CYTOCHROME_P450"/>
    <property type="match status" value="1"/>
</dbReference>
<evidence type="ECO:0000250" key="1"/>
<evidence type="ECO:0000255" key="2"/>
<evidence type="ECO:0000305" key="3"/>
<organism>
    <name type="scientific">Glycine max</name>
    <name type="common">Soybean</name>
    <name type="synonym">Glycine hispida</name>
    <dbReference type="NCBI Taxonomy" id="3847"/>
    <lineage>
        <taxon>Eukaryota</taxon>
        <taxon>Viridiplantae</taxon>
        <taxon>Streptophyta</taxon>
        <taxon>Embryophyta</taxon>
        <taxon>Tracheophyta</taxon>
        <taxon>Spermatophyta</taxon>
        <taxon>Magnoliopsida</taxon>
        <taxon>eudicotyledons</taxon>
        <taxon>Gunneridae</taxon>
        <taxon>Pentapetalae</taxon>
        <taxon>rosids</taxon>
        <taxon>fabids</taxon>
        <taxon>Fabales</taxon>
        <taxon>Fabaceae</taxon>
        <taxon>Papilionoideae</taxon>
        <taxon>50 kb inversion clade</taxon>
        <taxon>NPAAA clade</taxon>
        <taxon>indigoferoid/millettioid clade</taxon>
        <taxon>Phaseoleae</taxon>
        <taxon>Glycine</taxon>
        <taxon>Glycine subgen. Soja</taxon>
    </lineage>
</organism>
<reference key="1">
    <citation type="submission" date="1997-09" db="EMBL/GenBank/DDBJ databases">
        <authorList>
            <person name="Siminszky B."/>
            <person name="Dewey R.E."/>
            <person name="Corbin F.T."/>
        </authorList>
    </citation>
    <scope>NUCLEOTIDE SEQUENCE [MRNA]</scope>
</reference>
<protein>
    <recommendedName>
        <fullName>Cytochrome P450 97B2, chloroplastic</fullName>
        <ecNumber>1.14.-.-</ecNumber>
    </recommendedName>
</protein>
<keyword id="KW-0150">Chloroplast</keyword>
<keyword id="KW-0349">Heme</keyword>
<keyword id="KW-0408">Iron</keyword>
<keyword id="KW-0472">Membrane</keyword>
<keyword id="KW-0479">Metal-binding</keyword>
<keyword id="KW-0503">Monooxygenase</keyword>
<keyword id="KW-0560">Oxidoreductase</keyword>
<keyword id="KW-0934">Plastid</keyword>
<keyword id="KW-1185">Reference proteome</keyword>
<keyword id="KW-0809">Transit peptide</keyword>
<accession>O48921</accession>
<feature type="transit peptide" description="Chloroplast" evidence="2">
    <location>
        <begin position="1"/>
        <end position="44"/>
    </location>
</feature>
<feature type="chain" id="PRO_0000052195" description="Cytochrome P450 97B2, chloroplastic">
    <location>
        <begin position="45"/>
        <end position="576"/>
    </location>
</feature>
<feature type="binding site" description="axial binding residue" evidence="1">
    <location>
        <position position="519"/>
    </location>
    <ligand>
        <name>heme</name>
        <dbReference type="ChEBI" id="CHEBI:30413"/>
    </ligand>
    <ligandPart>
        <name>Fe</name>
        <dbReference type="ChEBI" id="CHEBI:18248"/>
    </ligandPart>
</feature>
<proteinExistence type="evidence at transcript level"/>
<sequence>MSVDTSSTLSTVTDANLHSRFHSRLVPFTHHFSLSQPKRISSIRCQSINTDKKKSSRNLLGNASNLLTDLLSGGSIGSMPIAEGAVSDLLGRPLFFSLYDWFLEHGAVYKLAFGPKAFVVVSDPIVARHILRENAFSYDKGVLADILEPIMGKGLIPADLDTWKQRRRVIAPAFHNSYLEAMVKIFTTCSERTILKFNKLLEGEGYDGPDSIELDLEAEFSSLALDIIGLGVFNYDFGSVTKESPVIKAVYGTLFEAEHRSTFYIPYWKIPLARWIVPRQRKFQDDLKVINTCLDGLIRNAKESRQETDVEKLQQRDYLNLKDASLLRFLVDMRGADVDDRQLRDDLMTMLIAGHETTAAVLTWAVFLLAQNPSKMKKAQAEVDLVLGTGRPTFESLKELQYIRLIVVEALRLYPQPPLLIRRSLKSDVLPGGHKGEKDGYAIPAGTDVFISVYNLHRSPYFWDRPDDFEPERFLVQNKNEEIEGWAGLDPSRSPGALYPNEVISDFAFLPFGGGPRKCVGDQFALMESTVALTMLLQNFDVELKGTPESVELVTGATIHTKNGMWCRLKKRSNLR</sequence>
<comment type="cofactor">
    <cofactor evidence="1">
        <name>heme</name>
        <dbReference type="ChEBI" id="CHEBI:30413"/>
    </cofactor>
</comment>
<comment type="subcellular location">
    <subcellularLocation>
        <location evidence="3">Plastid</location>
        <location evidence="3">Chloroplast membrane</location>
    </subcellularLocation>
</comment>
<comment type="similarity">
    <text evidence="3">Belongs to the cytochrome P450 family.</text>
</comment>
<gene>
    <name type="primary">CYP97B2</name>
</gene>